<organism>
    <name type="scientific">Homo sapiens</name>
    <name type="common">Human</name>
    <dbReference type="NCBI Taxonomy" id="9606"/>
    <lineage>
        <taxon>Eukaryota</taxon>
        <taxon>Metazoa</taxon>
        <taxon>Chordata</taxon>
        <taxon>Craniata</taxon>
        <taxon>Vertebrata</taxon>
        <taxon>Euteleostomi</taxon>
        <taxon>Mammalia</taxon>
        <taxon>Eutheria</taxon>
        <taxon>Euarchontoglires</taxon>
        <taxon>Primates</taxon>
        <taxon>Haplorrhini</taxon>
        <taxon>Catarrhini</taxon>
        <taxon>Hominidae</taxon>
        <taxon>Homo</taxon>
    </lineage>
</organism>
<proteinExistence type="evidence at protein level"/>
<reference key="1">
    <citation type="journal article" date="2003" name="Nature">
        <title>The DNA sequence and analysis of human chromosome 14.</title>
        <authorList>
            <person name="Heilig R."/>
            <person name="Eckenberg R."/>
            <person name="Petit J.-L."/>
            <person name="Fonknechten N."/>
            <person name="Da Silva C."/>
            <person name="Cattolico L."/>
            <person name="Levy M."/>
            <person name="Barbe V."/>
            <person name="De Berardinis V."/>
            <person name="Ureta-Vidal A."/>
            <person name="Pelletier E."/>
            <person name="Vico V."/>
            <person name="Anthouard V."/>
            <person name="Rowen L."/>
            <person name="Madan A."/>
            <person name="Qin S."/>
            <person name="Sun H."/>
            <person name="Du H."/>
            <person name="Pepin K."/>
            <person name="Artiguenave F."/>
            <person name="Robert C."/>
            <person name="Cruaud C."/>
            <person name="Bruels T."/>
            <person name="Jaillon O."/>
            <person name="Friedlander L."/>
            <person name="Samson G."/>
            <person name="Brottier P."/>
            <person name="Cure S."/>
            <person name="Segurens B."/>
            <person name="Aniere F."/>
            <person name="Samain S."/>
            <person name="Crespeau H."/>
            <person name="Abbasi N."/>
            <person name="Aiach N."/>
            <person name="Boscus D."/>
            <person name="Dickhoff R."/>
            <person name="Dors M."/>
            <person name="Dubois I."/>
            <person name="Friedman C."/>
            <person name="Gouyvenoux M."/>
            <person name="James R."/>
            <person name="Madan A."/>
            <person name="Mairey-Estrada B."/>
            <person name="Mangenot S."/>
            <person name="Martins N."/>
            <person name="Menard M."/>
            <person name="Oztas S."/>
            <person name="Ratcliffe A."/>
            <person name="Shaffer T."/>
            <person name="Trask B."/>
            <person name="Vacherie B."/>
            <person name="Bellemere C."/>
            <person name="Belser C."/>
            <person name="Besnard-Gonnet M."/>
            <person name="Bartol-Mavel D."/>
            <person name="Boutard M."/>
            <person name="Briez-Silla S."/>
            <person name="Combette S."/>
            <person name="Dufosse-Laurent V."/>
            <person name="Ferron C."/>
            <person name="Lechaplais C."/>
            <person name="Louesse C."/>
            <person name="Muselet D."/>
            <person name="Magdelenat G."/>
            <person name="Pateau E."/>
            <person name="Petit E."/>
            <person name="Sirvain-Trukniewicz P."/>
            <person name="Trybou A."/>
            <person name="Vega-Czarny N."/>
            <person name="Bataille E."/>
            <person name="Bluet E."/>
            <person name="Bordelais I."/>
            <person name="Dubois M."/>
            <person name="Dumont C."/>
            <person name="Guerin T."/>
            <person name="Haffray S."/>
            <person name="Hammadi R."/>
            <person name="Muanga J."/>
            <person name="Pellouin V."/>
            <person name="Robert D."/>
            <person name="Wunderle E."/>
            <person name="Gauguet G."/>
            <person name="Roy A."/>
            <person name="Sainte-Marthe L."/>
            <person name="Verdier J."/>
            <person name="Verdier-Discala C."/>
            <person name="Hillier L.W."/>
            <person name="Fulton L."/>
            <person name="McPherson J."/>
            <person name="Matsuda F."/>
            <person name="Wilson R."/>
            <person name="Scarpelli C."/>
            <person name="Gyapay G."/>
            <person name="Wincker P."/>
            <person name="Saurin W."/>
            <person name="Quetier F."/>
            <person name="Waterston R."/>
            <person name="Hood L."/>
            <person name="Weissenbach J."/>
        </authorList>
    </citation>
    <scope>NUCLEOTIDE SEQUENCE [LARGE SCALE GENOMIC DNA] (IMGT ALLELE IGHV3-13*05)</scope>
</reference>
<reference key="2">
    <citation type="journal article" date="1976" name="Immunochemistry">
        <title>Comparative studies on monotypic IgM lambda and IgG kappa from an individual patient. III. The complete amino acid sequence of the VH region of the IgM paraprotein.</title>
        <authorList>
            <person name="Capra J.D."/>
            <person name="Hopper J.E."/>
        </authorList>
    </citation>
    <scope>PROTEIN SEQUENCE OF 20-116</scope>
</reference>
<reference key="3">
    <citation type="journal article" date="2001" name="Exp. Clin. Immunogenet.">
        <title>Nomenclature of the human immunoglobulin heavy (IGH) genes.</title>
        <authorList>
            <person name="Lefranc M.P."/>
        </authorList>
    </citation>
    <scope>NOMENCLATURE</scope>
</reference>
<reference key="4">
    <citation type="book" date="2001" name="The Immunoglobulin FactsBook.">
        <title>The Immunoglobulin FactsBook.</title>
        <editorList>
            <person name="Lefranc M.P."/>
            <person name="Lefranc G."/>
        </editorList>
        <authorList>
            <person name="Lefranc M.P."/>
            <person name="Lefranc G."/>
        </authorList>
    </citation>
    <scope>NOMENCLATURE</scope>
</reference>
<reference key="5">
    <citation type="journal article" date="2007" name="Annu. Rev. Genet.">
        <title>Immunoglobulin somatic hypermutation.</title>
        <authorList>
            <person name="Teng G."/>
            <person name="Papavasiliou F.N."/>
        </authorList>
    </citation>
    <scope>REVIEW ON SOMATIC HYPERMUTATION</scope>
</reference>
<reference key="6">
    <citation type="journal article" date="2010" name="J. Allergy Clin. Immunol.">
        <title>Structure and function of immunoglobulins.</title>
        <authorList>
            <person name="Schroeder H.W. Jr."/>
            <person name="Cavacini L."/>
        </authorList>
    </citation>
    <scope>REVIEW ON IMMUNOGLOBULINS</scope>
</reference>
<reference key="7">
    <citation type="journal article" date="2012" name="Nat. Rev. Immunol.">
        <title>Molecular programming of B cell memory.</title>
        <authorList>
            <person name="McHeyzer-Williams M."/>
            <person name="Okitsu S."/>
            <person name="Wang N."/>
            <person name="McHeyzer-Williams L."/>
        </authorList>
    </citation>
    <scope>REVIEW ON FUNCTION</scope>
</reference>
<reference key="8">
    <citation type="journal article" date="2014" name="Front. Immunol.">
        <title>Immunoglobulin and T Cell Receptor Genes: IMGT((R)) and the Birth and Rise of Immunoinformatics.</title>
        <authorList>
            <person name="Lefranc M.P."/>
        </authorList>
    </citation>
    <scope>NOMENCLATURE</scope>
</reference>
<protein>
    <recommendedName>
        <fullName evidence="4 9">Immunoglobulin heavy variable 3-13</fullName>
    </recommendedName>
    <alternativeName>
        <fullName evidence="11">Ig heavy chain V-III region BRO</fullName>
    </alternativeName>
</protein>
<feature type="signal peptide" evidence="3">
    <location>
        <begin position="1"/>
        <end position="19"/>
    </location>
</feature>
<feature type="chain" id="PRO_0000059917" description="Immunoglobulin heavy variable 3-13" evidence="3">
    <location>
        <begin position="20"/>
        <end position="116"/>
    </location>
</feature>
<feature type="domain" description="Ig-like" evidence="2">
    <location>
        <begin position="20"/>
        <end position="116" status="greater than"/>
    </location>
</feature>
<feature type="region of interest" description="Framework-1" evidence="1">
    <location>
        <begin position="20"/>
        <end position="44"/>
    </location>
</feature>
<feature type="region of interest" description="Complementarity-determining-1" evidence="1">
    <location>
        <begin position="45"/>
        <end position="52"/>
    </location>
</feature>
<feature type="region of interest" description="Framework-2" evidence="1">
    <location>
        <begin position="53"/>
        <end position="69"/>
    </location>
</feature>
<feature type="region of interest" description="Complementarity-determining-2" evidence="1">
    <location>
        <begin position="70"/>
        <end position="76"/>
    </location>
</feature>
<feature type="region of interest" description="Framework-3" evidence="1">
    <location>
        <begin position="77"/>
        <end position="114"/>
    </location>
</feature>
<feature type="region of interest" description="Complementarity-determining-3" evidence="1">
    <location>
        <begin position="115"/>
        <end position="116" status="greater than"/>
    </location>
</feature>
<feature type="disulfide bond" evidence="2">
    <location>
        <begin position="41"/>
        <end position="114"/>
    </location>
</feature>
<feature type="sequence conflict" description="In Ref. 2; AA sequence." evidence="10" ref="2">
    <original>SYDMH</original>
    <variation>YYNMNW</variation>
    <location>
        <begin position="50"/>
        <end position="54"/>
    </location>
</feature>
<feature type="sequence conflict" description="In Ref. 2; AA sequence." evidence="10" ref="2">
    <original>A</original>
    <variation>V</variation>
    <location>
        <position position="59"/>
    </location>
</feature>
<feature type="sequence conflict" description="In Ref. 2; AA sequence." evidence="10" ref="2">
    <original>P</original>
    <variation>Q</variation>
    <location>
        <position position="76"/>
    </location>
</feature>
<feature type="sequence conflict" description="In Ref. 2; AA sequence." evidence="10" ref="2">
    <original>PG</original>
    <variation>AD</variation>
    <location>
        <begin position="79"/>
        <end position="80"/>
    </location>
</feature>
<feature type="sequence conflict" description="In Ref. 2; AA sequence." evidence="10" ref="2">
    <original>ENA</original>
    <variation>NDS</variation>
    <location>
        <begin position="91"/>
        <end position="93"/>
    </location>
</feature>
<feature type="sequence conflict" description="In Ref. 2; AA sequence." evidence="10" ref="2">
    <original>S</original>
    <variation>T</variation>
    <location>
        <position position="96"/>
    </location>
</feature>
<feature type="sequence conflict" description="In Ref. 2; AA sequence." evidence="10" ref="2">
    <original>Q</original>
    <variation>N</variation>
    <location>
        <position position="100"/>
    </location>
</feature>
<feature type="sequence conflict" description="In Ref. 2; AA sequence." evidence="10" ref="2">
    <original>G</original>
    <variation>E</variation>
    <location>
        <position position="107"/>
    </location>
</feature>
<feature type="non-terminal residue">
    <location>
        <position position="116"/>
    </location>
</feature>
<keyword id="KW-1064">Adaptive immunity</keyword>
<keyword id="KW-1003">Cell membrane</keyword>
<keyword id="KW-0903">Direct protein sequencing</keyword>
<keyword id="KW-1015">Disulfide bond</keyword>
<keyword id="KW-0391">Immunity</keyword>
<keyword id="KW-1280">Immunoglobulin</keyword>
<keyword id="KW-0393">Immunoglobulin domain</keyword>
<keyword id="KW-0472">Membrane</keyword>
<keyword id="KW-1267">Proteomics identification</keyword>
<keyword id="KW-1185">Reference proteome</keyword>
<keyword id="KW-0964">Secreted</keyword>
<keyword id="KW-0732">Signal</keyword>
<evidence type="ECO:0000250" key="1">
    <source>
        <dbReference type="UniProtKB" id="P23083"/>
    </source>
</evidence>
<evidence type="ECO:0000255" key="2">
    <source>
        <dbReference type="PROSITE-ProRule" id="PRU00114"/>
    </source>
</evidence>
<evidence type="ECO:0000269" key="3">
    <source>
    </source>
</evidence>
<evidence type="ECO:0000303" key="4">
    <source>
    </source>
</evidence>
<evidence type="ECO:0000303" key="5">
    <source>
    </source>
</evidence>
<evidence type="ECO:0000303" key="6">
    <source>
    </source>
</evidence>
<evidence type="ECO:0000303" key="7">
    <source>
    </source>
</evidence>
<evidence type="ECO:0000303" key="8">
    <source>
    </source>
</evidence>
<evidence type="ECO:0000303" key="9">
    <source ref="4"/>
</evidence>
<evidence type="ECO:0000305" key="10"/>
<evidence type="ECO:0000305" key="11">
    <source>
    </source>
</evidence>
<gene>
    <name evidence="4 9" type="primary">IGHV3-13</name>
</gene>
<dbReference type="EMBL" id="AC247036">
    <property type="status" value="NOT_ANNOTATED_CDS"/>
    <property type="molecule type" value="Genomic_DNA"/>
</dbReference>
<dbReference type="PIR" id="A02049">
    <property type="entry name" value="M3HUBW"/>
</dbReference>
<dbReference type="SMR" id="P01766"/>
<dbReference type="FunCoup" id="P01766">
    <property type="interactions" value="352"/>
</dbReference>
<dbReference type="IMGT_GENE-DB" id="IGHV3-13"/>
<dbReference type="BioMuta" id="IGHV3-13"/>
<dbReference type="DMDM" id="123845"/>
<dbReference type="jPOST" id="P01766"/>
<dbReference type="MassIVE" id="P01766"/>
<dbReference type="PRIDE" id="P01766"/>
<dbReference type="Ensembl" id="ENST00000390602.3">
    <property type="protein sequence ID" value="ENSP00000375011.2"/>
    <property type="gene ID" value="ENSG00000211942.3"/>
</dbReference>
<dbReference type="Ensembl" id="ENST00000631975.1">
    <property type="protein sequence ID" value="ENSP00000488851.1"/>
    <property type="gene ID" value="ENSG00000282286.1"/>
</dbReference>
<dbReference type="UCSC" id="uc059gft.1">
    <property type="organism name" value="human"/>
</dbReference>
<dbReference type="AGR" id="HGNC:5581"/>
<dbReference type="GeneCards" id="IGHV3-13"/>
<dbReference type="HGNC" id="HGNC:5581">
    <property type="gene designation" value="IGHV3-13"/>
</dbReference>
<dbReference type="HPA" id="ENSG00000211942">
    <property type="expression patterns" value="Tissue enhanced (intestine, lymphoid tissue, urinary bladder)"/>
</dbReference>
<dbReference type="neXtProt" id="NX_P01766"/>
<dbReference type="OpenTargets" id="ENSG00000211942"/>
<dbReference type="VEuPathDB" id="HostDB:ENSG00000211942"/>
<dbReference type="GeneTree" id="ENSGT01050000244871"/>
<dbReference type="InParanoid" id="P01766"/>
<dbReference type="OMA" id="YCTTFEM"/>
<dbReference type="PAN-GO" id="P01766">
    <property type="GO annotations" value="11 GO annotations based on evolutionary models"/>
</dbReference>
<dbReference type="PhylomeDB" id="P01766"/>
<dbReference type="PathwayCommons" id="P01766"/>
<dbReference type="Reactome" id="R-HSA-166663">
    <property type="pathway name" value="Initial triggering of complement"/>
</dbReference>
<dbReference type="Reactome" id="R-HSA-173623">
    <property type="pathway name" value="Classical antibody-mediated complement activation"/>
</dbReference>
<dbReference type="Reactome" id="R-HSA-198933">
    <property type="pathway name" value="Immunoregulatory interactions between a Lymphoid and a non-Lymphoid cell"/>
</dbReference>
<dbReference type="Reactome" id="R-HSA-202733">
    <property type="pathway name" value="Cell surface interactions at the vascular wall"/>
</dbReference>
<dbReference type="Reactome" id="R-HSA-2029481">
    <property type="pathway name" value="FCGR activation"/>
</dbReference>
<dbReference type="Reactome" id="R-HSA-2029482">
    <property type="pathway name" value="Regulation of actin dynamics for phagocytic cup formation"/>
</dbReference>
<dbReference type="Reactome" id="R-HSA-2029485">
    <property type="pathway name" value="Role of phospholipids in phagocytosis"/>
</dbReference>
<dbReference type="Reactome" id="R-HSA-2168880">
    <property type="pathway name" value="Scavenging of heme from plasma"/>
</dbReference>
<dbReference type="Reactome" id="R-HSA-2454202">
    <property type="pathway name" value="Fc epsilon receptor (FCERI) signaling"/>
</dbReference>
<dbReference type="Reactome" id="R-HSA-2730905">
    <property type="pathway name" value="Role of LAT2/NTAL/LAB on calcium mobilization"/>
</dbReference>
<dbReference type="Reactome" id="R-HSA-2871796">
    <property type="pathway name" value="FCERI mediated MAPK activation"/>
</dbReference>
<dbReference type="Reactome" id="R-HSA-2871809">
    <property type="pathway name" value="FCERI mediated Ca+2 mobilization"/>
</dbReference>
<dbReference type="Reactome" id="R-HSA-2871837">
    <property type="pathway name" value="FCERI mediated NF-kB activation"/>
</dbReference>
<dbReference type="Reactome" id="R-HSA-5690714">
    <property type="pathway name" value="CD22 mediated BCR regulation"/>
</dbReference>
<dbReference type="Reactome" id="R-HSA-9664323">
    <property type="pathway name" value="FCGR3A-mediated IL10 synthesis"/>
</dbReference>
<dbReference type="Reactome" id="R-HSA-9664422">
    <property type="pathway name" value="FCGR3A-mediated phagocytosis"/>
</dbReference>
<dbReference type="Reactome" id="R-HSA-9679191">
    <property type="pathway name" value="Potential therapeutics for SARS"/>
</dbReference>
<dbReference type="Reactome" id="R-HSA-977606">
    <property type="pathway name" value="Regulation of Complement cascade"/>
</dbReference>
<dbReference type="Reactome" id="R-HSA-983695">
    <property type="pathway name" value="Antigen activates B Cell Receptor (BCR) leading to generation of second messengers"/>
</dbReference>
<dbReference type="ChiTaRS" id="IGHV3-13">
    <property type="organism name" value="human"/>
</dbReference>
<dbReference type="Pharos" id="P01766">
    <property type="development level" value="Tdark"/>
</dbReference>
<dbReference type="PRO" id="PR:P01766"/>
<dbReference type="Proteomes" id="UP000005640">
    <property type="component" value="Chromosome 14"/>
</dbReference>
<dbReference type="RNAct" id="P01766">
    <property type="molecule type" value="protein"/>
</dbReference>
<dbReference type="Bgee" id="ENSG00000211942">
    <property type="expression patterns" value="Expressed in duodenum and 86 other cell types or tissues"/>
</dbReference>
<dbReference type="GO" id="GO:0072562">
    <property type="term" value="C:blood microparticle"/>
    <property type="evidence" value="ECO:0007005"/>
    <property type="project" value="UniProtKB"/>
</dbReference>
<dbReference type="GO" id="GO:0005576">
    <property type="term" value="C:extracellular region"/>
    <property type="evidence" value="ECO:0000304"/>
    <property type="project" value="Reactome"/>
</dbReference>
<dbReference type="GO" id="GO:0005615">
    <property type="term" value="C:extracellular space"/>
    <property type="evidence" value="ECO:0007005"/>
    <property type="project" value="UniProtKB"/>
</dbReference>
<dbReference type="GO" id="GO:0019814">
    <property type="term" value="C:immunoglobulin complex"/>
    <property type="evidence" value="ECO:0007669"/>
    <property type="project" value="UniProtKB-KW"/>
</dbReference>
<dbReference type="GO" id="GO:0005886">
    <property type="term" value="C:plasma membrane"/>
    <property type="evidence" value="ECO:0000304"/>
    <property type="project" value="Reactome"/>
</dbReference>
<dbReference type="GO" id="GO:0003823">
    <property type="term" value="F:antigen binding"/>
    <property type="evidence" value="ECO:0000318"/>
    <property type="project" value="GO_Central"/>
</dbReference>
<dbReference type="GO" id="GO:0006955">
    <property type="term" value="P:immune response"/>
    <property type="evidence" value="ECO:0000303"/>
    <property type="project" value="UniProtKB"/>
</dbReference>
<dbReference type="GO" id="GO:0016064">
    <property type="term" value="P:immunoglobulin mediated immune response"/>
    <property type="evidence" value="ECO:0000318"/>
    <property type="project" value="GO_Central"/>
</dbReference>
<dbReference type="FunFam" id="2.60.40.10:FF:001142">
    <property type="entry name" value="Immunoglobulin heavy variable 5-15"/>
    <property type="match status" value="1"/>
</dbReference>
<dbReference type="Gene3D" id="2.60.40.10">
    <property type="entry name" value="Immunoglobulins"/>
    <property type="match status" value="1"/>
</dbReference>
<dbReference type="InterPro" id="IPR007110">
    <property type="entry name" value="Ig-like_dom"/>
</dbReference>
<dbReference type="InterPro" id="IPR036179">
    <property type="entry name" value="Ig-like_dom_sf"/>
</dbReference>
<dbReference type="InterPro" id="IPR013783">
    <property type="entry name" value="Ig-like_fold"/>
</dbReference>
<dbReference type="InterPro" id="IPR013106">
    <property type="entry name" value="Ig_V-set"/>
</dbReference>
<dbReference type="InterPro" id="IPR050199">
    <property type="entry name" value="IgHV"/>
</dbReference>
<dbReference type="PANTHER" id="PTHR23266">
    <property type="entry name" value="IMMUNOGLOBULIN HEAVY CHAIN"/>
    <property type="match status" value="1"/>
</dbReference>
<dbReference type="Pfam" id="PF07686">
    <property type="entry name" value="V-set"/>
    <property type="match status" value="1"/>
</dbReference>
<dbReference type="SMART" id="SM00406">
    <property type="entry name" value="IGv"/>
    <property type="match status" value="1"/>
</dbReference>
<dbReference type="SUPFAM" id="SSF48726">
    <property type="entry name" value="Immunoglobulin"/>
    <property type="match status" value="1"/>
</dbReference>
<dbReference type="PROSITE" id="PS50835">
    <property type="entry name" value="IG_LIKE"/>
    <property type="match status" value="1"/>
</dbReference>
<sequence length="116" mass="12506">MELGLSWVFLVAILEGVQCEVQLVESGGGLVQPGGSLRLSCAASGFTFSSYDMHWVRQATGKGLEWVSAIGTAGDPYYPGSVKGRFTISRENAKNSLYLQMNSLRAGDTAVYYCAR</sequence>
<accession>P01766</accession>
<accession>A0A0A0MS11</accession>
<name>HV313_HUMAN</name>
<comment type="function">
    <text evidence="5 6 7 8">V region of the variable domain of immunoglobulin heavy chains that participates in the antigen recognition (PubMed:24600447). Immunoglobulins, also known as antibodies, are membrane-bound or secreted glycoproteins produced by B lymphocytes. In the recognition phase of humoral immunity, the membrane-bound immunoglobulins serve as receptors which, upon binding of a specific antigen, trigger the clonal expansion and differentiation of B lymphocytes into immunoglobulins-secreting plasma cells. Secreted immunoglobulins mediate the effector phase of humoral immunity, which results in the elimination of bound antigens (PubMed:20176268, PubMed:22158414). The antigen binding site is formed by the variable domain of one heavy chain, together with that of its associated light chain. Thus, each immunoglobulin has two antigen binding sites with remarkable affinity for a particular antigen. The variable domains are assembled by a process called V-(D)-J rearrangement and can then be subjected to somatic hypermutations which, after exposure to antigen and selection, allow affinity maturation for a particular antigen (PubMed:17576170, PubMed:20176268).</text>
</comment>
<comment type="subunit">
    <text evidence="6">Immunoglobulins are composed of two identical heavy chains and two identical light chains; disulfide-linked.</text>
</comment>
<comment type="subcellular location">
    <subcellularLocation>
        <location evidence="6 7">Secreted</location>
    </subcellularLocation>
    <subcellularLocation>
        <location evidence="6 7">Cell membrane</location>
    </subcellularLocation>
</comment>
<comment type="polymorphism">
    <text evidence="10">There are several alleles. The sequence shown is that of IMGT allele IGHV3-13*05.</text>
</comment>
<comment type="caution">
    <text evidence="10">For examples of full-length immunoglobulin heavy chains (of different isotypes) see AC P0DOX2, AC P0DOX3, AC P0DOX4, AC P0DOX5 and AC P0DOX6.</text>
</comment>